<sequence length="449" mass="50992">MSSKPFTPEEARRIVQVLQKPAVFLNMTTDWPALHWTVEHLSACLTKRIRFRVGKRSEDMAPLFETECSYVEATIKEFLSWTANDGEPLVGPFLDYHCKEFWAYADYKYIAQLFQDKPAMFQDVVWSDFGFPGRDGRDSTLWIGTQCANTPCHLDSYGCNLVFQIQGRKRWHLFPPDDTACLYPTRVPYEESSVFSHVNVIRPDLKKFPAYGRARLYTVTLQPGQVLFVPRHWWHYVESVDPVTVSVNSWIEMDMDDEARVAEALTKTIVCAVKSSPSLDNSDQWLNPTEDGVSSHDENMQYLNLAVKVCMNKKRDDIEDQPKAEAVKRDFSGVLKSPASPPSLVSFGPHLIPVHLTEKPQCSSTKDSCCFSCTDSPQCQITTKDQDKLRSDNKLGQRSGQSVLQDTENPGGSGEMHISTNDVLECLVHPDVIALVTRLIMCRQRELHS</sequence>
<comment type="function">
    <text evidence="1">May play a role in cellular stress response.</text>
</comment>
<comment type="subcellular location">
    <subcellularLocation>
        <location evidence="1">Cytoplasm</location>
    </subcellularLocation>
</comment>
<proteinExistence type="evidence at transcript level"/>
<reference key="1">
    <citation type="journal article" date="2013" name="Nature">
        <title>The zebrafish reference genome sequence and its relationship to the human genome.</title>
        <authorList>
            <person name="Howe K."/>
            <person name="Clark M.D."/>
            <person name="Torroja C.F."/>
            <person name="Torrance J."/>
            <person name="Berthelot C."/>
            <person name="Muffato M."/>
            <person name="Collins J.E."/>
            <person name="Humphray S."/>
            <person name="McLaren K."/>
            <person name="Matthews L."/>
            <person name="McLaren S."/>
            <person name="Sealy I."/>
            <person name="Caccamo M."/>
            <person name="Churcher C."/>
            <person name="Scott C."/>
            <person name="Barrett J.C."/>
            <person name="Koch R."/>
            <person name="Rauch G.J."/>
            <person name="White S."/>
            <person name="Chow W."/>
            <person name="Kilian B."/>
            <person name="Quintais L.T."/>
            <person name="Guerra-Assuncao J.A."/>
            <person name="Zhou Y."/>
            <person name="Gu Y."/>
            <person name="Yen J."/>
            <person name="Vogel J.H."/>
            <person name="Eyre T."/>
            <person name="Redmond S."/>
            <person name="Banerjee R."/>
            <person name="Chi J."/>
            <person name="Fu B."/>
            <person name="Langley E."/>
            <person name="Maguire S.F."/>
            <person name="Laird G.K."/>
            <person name="Lloyd D."/>
            <person name="Kenyon E."/>
            <person name="Donaldson S."/>
            <person name="Sehra H."/>
            <person name="Almeida-King J."/>
            <person name="Loveland J."/>
            <person name="Trevanion S."/>
            <person name="Jones M."/>
            <person name="Quail M."/>
            <person name="Willey D."/>
            <person name="Hunt A."/>
            <person name="Burton J."/>
            <person name="Sims S."/>
            <person name="McLay K."/>
            <person name="Plumb B."/>
            <person name="Davis J."/>
            <person name="Clee C."/>
            <person name="Oliver K."/>
            <person name="Clark R."/>
            <person name="Riddle C."/>
            <person name="Elliot D."/>
            <person name="Threadgold G."/>
            <person name="Harden G."/>
            <person name="Ware D."/>
            <person name="Begum S."/>
            <person name="Mortimore B."/>
            <person name="Kerry G."/>
            <person name="Heath P."/>
            <person name="Phillimore B."/>
            <person name="Tracey A."/>
            <person name="Corby N."/>
            <person name="Dunn M."/>
            <person name="Johnson C."/>
            <person name="Wood J."/>
            <person name="Clark S."/>
            <person name="Pelan S."/>
            <person name="Griffiths G."/>
            <person name="Smith M."/>
            <person name="Glithero R."/>
            <person name="Howden P."/>
            <person name="Barker N."/>
            <person name="Lloyd C."/>
            <person name="Stevens C."/>
            <person name="Harley J."/>
            <person name="Holt K."/>
            <person name="Panagiotidis G."/>
            <person name="Lovell J."/>
            <person name="Beasley H."/>
            <person name="Henderson C."/>
            <person name="Gordon D."/>
            <person name="Auger K."/>
            <person name="Wright D."/>
            <person name="Collins J."/>
            <person name="Raisen C."/>
            <person name="Dyer L."/>
            <person name="Leung K."/>
            <person name="Robertson L."/>
            <person name="Ambridge K."/>
            <person name="Leongamornlert D."/>
            <person name="McGuire S."/>
            <person name="Gilderthorp R."/>
            <person name="Griffiths C."/>
            <person name="Manthravadi D."/>
            <person name="Nichol S."/>
            <person name="Barker G."/>
            <person name="Whitehead S."/>
            <person name="Kay M."/>
            <person name="Brown J."/>
            <person name="Murnane C."/>
            <person name="Gray E."/>
            <person name="Humphries M."/>
            <person name="Sycamore N."/>
            <person name="Barker D."/>
            <person name="Saunders D."/>
            <person name="Wallis J."/>
            <person name="Babbage A."/>
            <person name="Hammond S."/>
            <person name="Mashreghi-Mohammadi M."/>
            <person name="Barr L."/>
            <person name="Martin S."/>
            <person name="Wray P."/>
            <person name="Ellington A."/>
            <person name="Matthews N."/>
            <person name="Ellwood M."/>
            <person name="Woodmansey R."/>
            <person name="Clark G."/>
            <person name="Cooper J."/>
            <person name="Tromans A."/>
            <person name="Grafham D."/>
            <person name="Skuce C."/>
            <person name="Pandian R."/>
            <person name="Andrews R."/>
            <person name="Harrison E."/>
            <person name="Kimberley A."/>
            <person name="Garnett J."/>
            <person name="Fosker N."/>
            <person name="Hall R."/>
            <person name="Garner P."/>
            <person name="Kelly D."/>
            <person name="Bird C."/>
            <person name="Palmer S."/>
            <person name="Gehring I."/>
            <person name="Berger A."/>
            <person name="Dooley C.M."/>
            <person name="Ersan-Urun Z."/>
            <person name="Eser C."/>
            <person name="Geiger H."/>
            <person name="Geisler M."/>
            <person name="Karotki L."/>
            <person name="Kirn A."/>
            <person name="Konantz J."/>
            <person name="Konantz M."/>
            <person name="Oberlander M."/>
            <person name="Rudolph-Geiger S."/>
            <person name="Teucke M."/>
            <person name="Lanz C."/>
            <person name="Raddatz G."/>
            <person name="Osoegawa K."/>
            <person name="Zhu B."/>
            <person name="Rapp A."/>
            <person name="Widaa S."/>
            <person name="Langford C."/>
            <person name="Yang F."/>
            <person name="Schuster S.C."/>
            <person name="Carter N.P."/>
            <person name="Harrow J."/>
            <person name="Ning Z."/>
            <person name="Herrero J."/>
            <person name="Searle S.M."/>
            <person name="Enright A."/>
            <person name="Geisler R."/>
            <person name="Plasterk R.H."/>
            <person name="Lee C."/>
            <person name="Westerfield M."/>
            <person name="de Jong P.J."/>
            <person name="Zon L.I."/>
            <person name="Postlethwait J.H."/>
            <person name="Nusslein-Volhard C."/>
            <person name="Hubbard T.J."/>
            <person name="Roest Crollius H."/>
            <person name="Rogers J."/>
            <person name="Stemple D.L."/>
        </authorList>
    </citation>
    <scope>NUCLEOTIDE SEQUENCE [LARGE SCALE GENOMIC DNA]</scope>
    <source>
        <strain>Tuebingen</strain>
    </source>
</reference>
<reference key="2">
    <citation type="submission" date="2004-08" db="EMBL/GenBank/DDBJ databases">
        <authorList>
            <consortium name="NIH - Zebrafish Gene Collection (ZGC) project"/>
        </authorList>
    </citation>
    <scope>NUCLEOTIDE SEQUENCE [LARGE SCALE MRNA]</scope>
    <source>
        <tissue>Embryo</tissue>
    </source>
</reference>
<organism>
    <name type="scientific">Danio rerio</name>
    <name type="common">Zebrafish</name>
    <name type="synonym">Brachydanio rerio</name>
    <dbReference type="NCBI Taxonomy" id="7955"/>
    <lineage>
        <taxon>Eukaryota</taxon>
        <taxon>Metazoa</taxon>
        <taxon>Chordata</taxon>
        <taxon>Craniata</taxon>
        <taxon>Vertebrata</taxon>
        <taxon>Euteleostomi</taxon>
        <taxon>Actinopterygii</taxon>
        <taxon>Neopterygii</taxon>
        <taxon>Teleostei</taxon>
        <taxon>Ostariophysi</taxon>
        <taxon>Cypriniformes</taxon>
        <taxon>Danionidae</taxon>
        <taxon>Danioninae</taxon>
        <taxon>Danio</taxon>
    </lineage>
</organism>
<protein>
    <recommendedName>
        <fullName>HSPB1-associated protein 1 homolog</fullName>
    </recommendedName>
</protein>
<accession>Q6AXL5</accession>
<accession>B0S6T4</accession>
<name>HBAP1_DANRE</name>
<keyword id="KW-0963">Cytoplasm</keyword>
<keyword id="KW-1185">Reference proteome</keyword>
<evidence type="ECO:0000250" key="1"/>
<evidence type="ECO:0000255" key="2">
    <source>
        <dbReference type="PROSITE-ProRule" id="PRU00538"/>
    </source>
</evidence>
<evidence type="ECO:0000256" key="3">
    <source>
        <dbReference type="SAM" id="MobiDB-lite"/>
    </source>
</evidence>
<evidence type="ECO:0000305" key="4"/>
<feature type="chain" id="PRO_0000284116" description="HSPB1-associated protein 1 homolog">
    <location>
        <begin position="1"/>
        <end position="449"/>
    </location>
</feature>
<feature type="domain" description="JmjC" evidence="2">
    <location>
        <begin position="102"/>
        <end position="266"/>
    </location>
</feature>
<feature type="region of interest" description="Disordered" evidence="3">
    <location>
        <begin position="385"/>
        <end position="416"/>
    </location>
</feature>
<feature type="compositionally biased region" description="Basic and acidic residues" evidence="3">
    <location>
        <begin position="385"/>
        <end position="395"/>
    </location>
</feature>
<feature type="compositionally biased region" description="Polar residues" evidence="3">
    <location>
        <begin position="396"/>
        <end position="410"/>
    </location>
</feature>
<feature type="sequence conflict" description="In Ref. 2; AAH79489." evidence="4" ref="2">
    <original>K</original>
    <variation>E</variation>
    <location>
        <position position="47"/>
    </location>
</feature>
<feature type="sequence conflict" description="In Ref. 2; AAH79489." evidence="4" ref="2">
    <original>PFL</original>
    <variation>AFS</variation>
    <location>
        <begin position="92"/>
        <end position="94"/>
    </location>
</feature>
<feature type="sequence conflict" description="In Ref. 2; AAH79489." evidence="4" ref="2">
    <original>V</original>
    <variation>A</variation>
    <location>
        <position position="309"/>
    </location>
</feature>
<feature type="sequence conflict" description="In Ref. 2; AAH79489." evidence="4" ref="2">
    <original>E</original>
    <variation>Q</variation>
    <location>
        <position position="325"/>
    </location>
</feature>
<feature type="sequence conflict" description="In Ref. 2; AAH79489." evidence="4" ref="2">
    <original>EN</original>
    <variation>GS</variation>
    <location>
        <begin position="408"/>
        <end position="409"/>
    </location>
</feature>
<dbReference type="EMBL" id="BX548071">
    <property type="protein sequence ID" value="CAQ14575.1"/>
    <property type="molecule type" value="Genomic_DNA"/>
</dbReference>
<dbReference type="EMBL" id="BC079489">
    <property type="protein sequence ID" value="AAH79489.1"/>
    <property type="molecule type" value="mRNA"/>
</dbReference>
<dbReference type="RefSeq" id="NP_001003777.1">
    <property type="nucleotide sequence ID" value="NM_001003777.2"/>
</dbReference>
<dbReference type="RefSeq" id="XP_021334317.1">
    <property type="nucleotide sequence ID" value="XM_021478642.2"/>
</dbReference>
<dbReference type="SMR" id="Q6AXL5"/>
<dbReference type="FunCoup" id="Q6AXL5">
    <property type="interactions" value="920"/>
</dbReference>
<dbReference type="STRING" id="7955.ENSDARP00000039912"/>
<dbReference type="PaxDb" id="7955-ENSDARP00000039912"/>
<dbReference type="Ensembl" id="ENSDART00000039913">
    <property type="protein sequence ID" value="ENSDARP00000039912"/>
    <property type="gene ID" value="ENSDARG00000033771"/>
</dbReference>
<dbReference type="GeneID" id="445320"/>
<dbReference type="KEGG" id="dre:445320"/>
<dbReference type="AGR" id="ZFIN:ZDB-GENE-040808-38"/>
<dbReference type="CTD" id="79663"/>
<dbReference type="ZFIN" id="ZDB-GENE-040808-38">
    <property type="gene designation" value="hspbap1"/>
</dbReference>
<dbReference type="eggNOG" id="KOG2132">
    <property type="taxonomic scope" value="Eukaryota"/>
</dbReference>
<dbReference type="HOGENOM" id="CLU_016785_5_1_1"/>
<dbReference type="InParanoid" id="Q6AXL5"/>
<dbReference type="OrthoDB" id="47172at2759"/>
<dbReference type="PhylomeDB" id="Q6AXL5"/>
<dbReference type="TreeFam" id="TF315056"/>
<dbReference type="PRO" id="PR:Q6AXL5"/>
<dbReference type="Proteomes" id="UP000000437">
    <property type="component" value="Chromosome 9"/>
</dbReference>
<dbReference type="Bgee" id="ENSDARG00000033771">
    <property type="expression patterns" value="Expressed in ovary and 21 other cell types or tissues"/>
</dbReference>
<dbReference type="ExpressionAtlas" id="Q6AXL5">
    <property type="expression patterns" value="baseline"/>
</dbReference>
<dbReference type="GO" id="GO:0005737">
    <property type="term" value="C:cytoplasm"/>
    <property type="evidence" value="ECO:0007669"/>
    <property type="project" value="UniProtKB-SubCell"/>
</dbReference>
<dbReference type="GO" id="GO:0016706">
    <property type="term" value="F:2-oxoglutarate-dependent dioxygenase activity"/>
    <property type="evidence" value="ECO:0000318"/>
    <property type="project" value="GO_Central"/>
</dbReference>
<dbReference type="FunFam" id="2.60.120.650:FF:000018">
    <property type="entry name" value="HSPB1-associated protein 1 homolog"/>
    <property type="match status" value="1"/>
</dbReference>
<dbReference type="Gene3D" id="2.60.120.650">
    <property type="entry name" value="Cupin"/>
    <property type="match status" value="1"/>
</dbReference>
<dbReference type="InterPro" id="IPR041667">
    <property type="entry name" value="Cupin_8"/>
</dbReference>
<dbReference type="InterPro" id="IPR003347">
    <property type="entry name" value="JmjC_dom"/>
</dbReference>
<dbReference type="PANTHER" id="PTHR12461:SF43">
    <property type="entry name" value="HSPB1-ASSOCIATED PROTEIN 1"/>
    <property type="match status" value="1"/>
</dbReference>
<dbReference type="PANTHER" id="PTHR12461">
    <property type="entry name" value="HYPOXIA-INDUCIBLE FACTOR 1 ALPHA INHIBITOR-RELATED"/>
    <property type="match status" value="1"/>
</dbReference>
<dbReference type="Pfam" id="PF13621">
    <property type="entry name" value="Cupin_8"/>
    <property type="match status" value="1"/>
</dbReference>
<dbReference type="SMART" id="SM00558">
    <property type="entry name" value="JmjC"/>
    <property type="match status" value="1"/>
</dbReference>
<dbReference type="SUPFAM" id="SSF51197">
    <property type="entry name" value="Clavaminate synthase-like"/>
    <property type="match status" value="1"/>
</dbReference>
<dbReference type="PROSITE" id="PS51184">
    <property type="entry name" value="JMJC"/>
    <property type="match status" value="1"/>
</dbReference>
<gene>
    <name type="primary">hspbap1</name>
    <name type="ORF">si:dkey-25l23.5</name>
    <name type="ORF">zgc:100975</name>
</gene>